<name>QUEA_CLOBA</name>
<protein>
    <recommendedName>
        <fullName evidence="1">S-adenosylmethionine:tRNA ribosyltransferase-isomerase</fullName>
        <ecNumber evidence="1">2.4.99.17</ecNumber>
    </recommendedName>
    <alternativeName>
        <fullName evidence="1">Queuosine biosynthesis protein QueA</fullName>
    </alternativeName>
</protein>
<keyword id="KW-0963">Cytoplasm</keyword>
<keyword id="KW-0671">Queuosine biosynthesis</keyword>
<keyword id="KW-0949">S-adenosyl-L-methionine</keyword>
<keyword id="KW-0808">Transferase</keyword>
<reference key="1">
    <citation type="submission" date="2008-05" db="EMBL/GenBank/DDBJ databases">
        <title>Complete genome sequence of Clostridium botulinum E3 str. Alaska E43.</title>
        <authorList>
            <person name="Brinkac L.M."/>
            <person name="Brown J.L."/>
            <person name="Bruce D."/>
            <person name="Detter C."/>
            <person name="Munk C."/>
            <person name="Smith L.A."/>
            <person name="Smith T.J."/>
            <person name="Sutton G."/>
            <person name="Brettin T.S."/>
        </authorList>
    </citation>
    <scope>NUCLEOTIDE SEQUENCE [LARGE SCALE GENOMIC DNA]</scope>
    <source>
        <strain>Alaska E43 / Type E3</strain>
    </source>
</reference>
<dbReference type="EC" id="2.4.99.17" evidence="1"/>
<dbReference type="EMBL" id="CP001078">
    <property type="protein sequence ID" value="ACD52583.1"/>
    <property type="molecule type" value="Genomic_DNA"/>
</dbReference>
<dbReference type="RefSeq" id="WP_003370127.1">
    <property type="nucleotide sequence ID" value="NC_010723.1"/>
</dbReference>
<dbReference type="SMR" id="B2V339"/>
<dbReference type="KEGG" id="cbt:CLH_0958"/>
<dbReference type="HOGENOM" id="CLU_039110_1_0_9"/>
<dbReference type="UniPathway" id="UPA00392"/>
<dbReference type="GO" id="GO:0005737">
    <property type="term" value="C:cytoplasm"/>
    <property type="evidence" value="ECO:0007669"/>
    <property type="project" value="UniProtKB-SubCell"/>
</dbReference>
<dbReference type="GO" id="GO:0051075">
    <property type="term" value="F:S-adenosylmethionine:tRNA ribosyltransferase-isomerase activity"/>
    <property type="evidence" value="ECO:0007669"/>
    <property type="project" value="UniProtKB-EC"/>
</dbReference>
<dbReference type="GO" id="GO:0008616">
    <property type="term" value="P:queuosine biosynthetic process"/>
    <property type="evidence" value="ECO:0007669"/>
    <property type="project" value="UniProtKB-UniRule"/>
</dbReference>
<dbReference type="GO" id="GO:0002099">
    <property type="term" value="P:tRNA wobble guanine modification"/>
    <property type="evidence" value="ECO:0007669"/>
    <property type="project" value="TreeGrafter"/>
</dbReference>
<dbReference type="FunFam" id="2.40.10.240:FF:000002">
    <property type="entry name" value="S-adenosylmethionine:tRNA ribosyltransferase-isomerase"/>
    <property type="match status" value="1"/>
</dbReference>
<dbReference type="FunFam" id="3.40.1780.10:FF:000001">
    <property type="entry name" value="S-adenosylmethionine:tRNA ribosyltransferase-isomerase"/>
    <property type="match status" value="1"/>
</dbReference>
<dbReference type="Gene3D" id="2.40.10.240">
    <property type="entry name" value="QueA-like"/>
    <property type="match status" value="1"/>
</dbReference>
<dbReference type="Gene3D" id="3.40.1780.10">
    <property type="entry name" value="QueA-like"/>
    <property type="match status" value="1"/>
</dbReference>
<dbReference type="HAMAP" id="MF_00113">
    <property type="entry name" value="QueA"/>
    <property type="match status" value="1"/>
</dbReference>
<dbReference type="InterPro" id="IPR003699">
    <property type="entry name" value="QueA"/>
</dbReference>
<dbReference type="InterPro" id="IPR042118">
    <property type="entry name" value="QueA_dom1"/>
</dbReference>
<dbReference type="InterPro" id="IPR042119">
    <property type="entry name" value="QueA_dom2"/>
</dbReference>
<dbReference type="InterPro" id="IPR036100">
    <property type="entry name" value="QueA_sf"/>
</dbReference>
<dbReference type="NCBIfam" id="NF001140">
    <property type="entry name" value="PRK00147.1"/>
    <property type="match status" value="1"/>
</dbReference>
<dbReference type="NCBIfam" id="TIGR00113">
    <property type="entry name" value="queA"/>
    <property type="match status" value="1"/>
</dbReference>
<dbReference type="PANTHER" id="PTHR30307">
    <property type="entry name" value="S-ADENOSYLMETHIONINE:TRNA RIBOSYLTRANSFERASE-ISOMERASE"/>
    <property type="match status" value="1"/>
</dbReference>
<dbReference type="PANTHER" id="PTHR30307:SF0">
    <property type="entry name" value="S-ADENOSYLMETHIONINE:TRNA RIBOSYLTRANSFERASE-ISOMERASE"/>
    <property type="match status" value="1"/>
</dbReference>
<dbReference type="Pfam" id="PF02547">
    <property type="entry name" value="Queuosine_synth"/>
    <property type="match status" value="1"/>
</dbReference>
<dbReference type="SUPFAM" id="SSF111337">
    <property type="entry name" value="QueA-like"/>
    <property type="match status" value="1"/>
</dbReference>
<comment type="function">
    <text evidence="1">Transfers and isomerizes the ribose moiety from AdoMet to the 7-aminomethyl group of 7-deazaguanine (preQ1-tRNA) to give epoxyqueuosine (oQ-tRNA).</text>
</comment>
<comment type="catalytic activity">
    <reaction evidence="1">
        <text>7-aminomethyl-7-carbaguanosine(34) in tRNA + S-adenosyl-L-methionine = epoxyqueuosine(34) in tRNA + adenine + L-methionine + 2 H(+)</text>
        <dbReference type="Rhea" id="RHEA:32155"/>
        <dbReference type="Rhea" id="RHEA-COMP:10342"/>
        <dbReference type="Rhea" id="RHEA-COMP:18582"/>
        <dbReference type="ChEBI" id="CHEBI:15378"/>
        <dbReference type="ChEBI" id="CHEBI:16708"/>
        <dbReference type="ChEBI" id="CHEBI:57844"/>
        <dbReference type="ChEBI" id="CHEBI:59789"/>
        <dbReference type="ChEBI" id="CHEBI:82833"/>
        <dbReference type="ChEBI" id="CHEBI:194443"/>
        <dbReference type="EC" id="2.4.99.17"/>
    </reaction>
</comment>
<comment type="pathway">
    <text evidence="1">tRNA modification; tRNA-queuosine biosynthesis.</text>
</comment>
<comment type="subunit">
    <text evidence="1">Monomer.</text>
</comment>
<comment type="subcellular location">
    <subcellularLocation>
        <location evidence="1">Cytoplasm</location>
    </subcellularLocation>
</comment>
<comment type="similarity">
    <text evidence="1">Belongs to the QueA family.</text>
</comment>
<gene>
    <name evidence="1" type="primary">queA</name>
    <name type="ordered locus">CLH_0958</name>
</gene>
<feature type="chain" id="PRO_1000094765" description="S-adenosylmethionine:tRNA ribosyltransferase-isomerase">
    <location>
        <begin position="1"/>
        <end position="341"/>
    </location>
</feature>
<accession>B2V339</accession>
<organism>
    <name type="scientific">Clostridium botulinum (strain Alaska E43 / Type E3)</name>
    <dbReference type="NCBI Taxonomy" id="508767"/>
    <lineage>
        <taxon>Bacteria</taxon>
        <taxon>Bacillati</taxon>
        <taxon>Bacillota</taxon>
        <taxon>Clostridia</taxon>
        <taxon>Eubacteriales</taxon>
        <taxon>Clostridiaceae</taxon>
        <taxon>Clostridium</taxon>
    </lineage>
</organism>
<sequence>MNVKDFDFYLPEELIAQHPLEKRDTSRLMVLDKETGEISHKNFYDIIDYLNEGDTLVLNNTRVMPARLIGEKEGTGGKIEFLLLKRVDKDRWECLAKPGKSARVGRRFTFGDGKLKAEVVEVKENGNRIVEFYYEGIFEEVLDSLGEMPLPPYIHERLEDRERYQTVYSKENGSAAAPTAGLHFTEELLHKIKEKGINIAYVTLHVGLGTFRPVKVETIEDHEMHSEYYHLSKEDAEVINETKKRGNRVISVGTTSTRTLETIADEDGNVKETSGWTNIFIYPGYKFKVVDRLITNFHLPESTLIMLVSTLAGKEHVMNAYEEAVKERYRFFSFGDAMFIK</sequence>
<proteinExistence type="inferred from homology"/>
<evidence type="ECO:0000255" key="1">
    <source>
        <dbReference type="HAMAP-Rule" id="MF_00113"/>
    </source>
</evidence>